<gene>
    <name evidence="1" type="primary">rplQ</name>
    <name type="ordered locus">Pnec_0077</name>
</gene>
<evidence type="ECO:0000255" key="1">
    <source>
        <dbReference type="HAMAP-Rule" id="MF_01368"/>
    </source>
</evidence>
<evidence type="ECO:0000305" key="2"/>
<sequence length="131" mass="14966">MRHGNGLRKLNRTSSHRLAMLRNMSNSLLEHEVIKTTLPKAKELRMVVEPLITLGKKDNLANRRLAFNRTRDRDFVTKLFTELGPRYATRPGGYLRILKFGFRHGDNAPMALVELVDRPEVEETAAVAEEA</sequence>
<organism>
    <name type="scientific">Polynucleobacter necessarius subsp. necessarius (strain STIR1)</name>
    <dbReference type="NCBI Taxonomy" id="452638"/>
    <lineage>
        <taxon>Bacteria</taxon>
        <taxon>Pseudomonadati</taxon>
        <taxon>Pseudomonadota</taxon>
        <taxon>Betaproteobacteria</taxon>
        <taxon>Burkholderiales</taxon>
        <taxon>Burkholderiaceae</taxon>
        <taxon>Polynucleobacter</taxon>
    </lineage>
</organism>
<protein>
    <recommendedName>
        <fullName evidence="1">Large ribosomal subunit protein bL17</fullName>
    </recommendedName>
    <alternativeName>
        <fullName evidence="2">50S ribosomal protein L17</fullName>
    </alternativeName>
</protein>
<reference key="1">
    <citation type="journal article" date="2013" name="Proc. Natl. Acad. Sci. U.S.A.">
        <title>Polynucleobacter necessarius, a model for genome reduction in both free-living and symbiotic bacteria.</title>
        <authorList>
            <person name="Boscaro V."/>
            <person name="Felletti M."/>
            <person name="Vannini C."/>
            <person name="Ackerman M.S."/>
            <person name="Chain P.S."/>
            <person name="Malfatti S."/>
            <person name="Vergez L.M."/>
            <person name="Shin M."/>
            <person name="Doak T.G."/>
            <person name="Lynch M."/>
            <person name="Petroni G."/>
        </authorList>
    </citation>
    <scope>NUCLEOTIDE SEQUENCE [LARGE SCALE GENOMIC DNA]</scope>
    <source>
        <strain>STIR1</strain>
    </source>
</reference>
<proteinExistence type="inferred from homology"/>
<comment type="subunit">
    <text evidence="1">Part of the 50S ribosomal subunit. Contacts protein L32.</text>
</comment>
<comment type="similarity">
    <text evidence="1">Belongs to the bacterial ribosomal protein bL17 family.</text>
</comment>
<keyword id="KW-0687">Ribonucleoprotein</keyword>
<keyword id="KW-0689">Ribosomal protein</keyword>
<name>RL17_POLNS</name>
<accession>B1XSS8</accession>
<dbReference type="EMBL" id="CP001010">
    <property type="protein sequence ID" value="ACB43405.1"/>
    <property type="molecule type" value="Genomic_DNA"/>
</dbReference>
<dbReference type="SMR" id="B1XSS8"/>
<dbReference type="STRING" id="452638.Pnec_0077"/>
<dbReference type="KEGG" id="pne:Pnec_0077"/>
<dbReference type="eggNOG" id="COG0203">
    <property type="taxonomic scope" value="Bacteria"/>
</dbReference>
<dbReference type="HOGENOM" id="CLU_074407_2_0_4"/>
<dbReference type="OrthoDB" id="9809073at2"/>
<dbReference type="GO" id="GO:0022625">
    <property type="term" value="C:cytosolic large ribosomal subunit"/>
    <property type="evidence" value="ECO:0007669"/>
    <property type="project" value="TreeGrafter"/>
</dbReference>
<dbReference type="GO" id="GO:0003735">
    <property type="term" value="F:structural constituent of ribosome"/>
    <property type="evidence" value="ECO:0007669"/>
    <property type="project" value="InterPro"/>
</dbReference>
<dbReference type="GO" id="GO:0006412">
    <property type="term" value="P:translation"/>
    <property type="evidence" value="ECO:0007669"/>
    <property type="project" value="UniProtKB-UniRule"/>
</dbReference>
<dbReference type="FunFam" id="3.90.1030.10:FF:000001">
    <property type="entry name" value="50S ribosomal protein L17"/>
    <property type="match status" value="1"/>
</dbReference>
<dbReference type="Gene3D" id="3.90.1030.10">
    <property type="entry name" value="Ribosomal protein L17"/>
    <property type="match status" value="1"/>
</dbReference>
<dbReference type="HAMAP" id="MF_01368">
    <property type="entry name" value="Ribosomal_bL17"/>
    <property type="match status" value="1"/>
</dbReference>
<dbReference type="InterPro" id="IPR000456">
    <property type="entry name" value="Ribosomal_bL17"/>
</dbReference>
<dbReference type="InterPro" id="IPR047859">
    <property type="entry name" value="Ribosomal_bL17_CS"/>
</dbReference>
<dbReference type="InterPro" id="IPR036373">
    <property type="entry name" value="Ribosomal_bL17_sf"/>
</dbReference>
<dbReference type="NCBIfam" id="TIGR00059">
    <property type="entry name" value="L17"/>
    <property type="match status" value="1"/>
</dbReference>
<dbReference type="PANTHER" id="PTHR14413:SF16">
    <property type="entry name" value="LARGE RIBOSOMAL SUBUNIT PROTEIN BL17M"/>
    <property type="match status" value="1"/>
</dbReference>
<dbReference type="PANTHER" id="PTHR14413">
    <property type="entry name" value="RIBOSOMAL PROTEIN L17"/>
    <property type="match status" value="1"/>
</dbReference>
<dbReference type="Pfam" id="PF01196">
    <property type="entry name" value="Ribosomal_L17"/>
    <property type="match status" value="1"/>
</dbReference>
<dbReference type="SUPFAM" id="SSF64263">
    <property type="entry name" value="Prokaryotic ribosomal protein L17"/>
    <property type="match status" value="1"/>
</dbReference>
<dbReference type="PROSITE" id="PS01167">
    <property type="entry name" value="RIBOSOMAL_L17"/>
    <property type="match status" value="1"/>
</dbReference>
<feature type="chain" id="PRO_1000144463" description="Large ribosomal subunit protein bL17">
    <location>
        <begin position="1"/>
        <end position="131"/>
    </location>
</feature>